<dbReference type="EMBL" id="AAHF01000011">
    <property type="protein sequence ID" value="EAL85914.1"/>
    <property type="molecule type" value="Genomic_DNA"/>
</dbReference>
<dbReference type="RefSeq" id="XP_747952.1">
    <property type="nucleotide sequence ID" value="XM_742859.1"/>
</dbReference>
<dbReference type="SMR" id="Q4WER3"/>
<dbReference type="STRING" id="330879.Q4WER3"/>
<dbReference type="EnsemblFungi" id="EAL85914">
    <property type="protein sequence ID" value="EAL85914"/>
    <property type="gene ID" value="AFUA_5G03920"/>
</dbReference>
<dbReference type="GeneID" id="3505667"/>
<dbReference type="KEGG" id="afm:AFUA_5G03920"/>
<dbReference type="VEuPathDB" id="FungiDB:Afu5g03920"/>
<dbReference type="eggNOG" id="ENOG502QUE5">
    <property type="taxonomic scope" value="Eukaryota"/>
</dbReference>
<dbReference type="HOGENOM" id="CLU_014054_0_0_1"/>
<dbReference type="InParanoid" id="Q4WER3"/>
<dbReference type="OMA" id="MEIDFTA"/>
<dbReference type="OrthoDB" id="5374328at2759"/>
<dbReference type="PHI-base" id="PHI:2512"/>
<dbReference type="Proteomes" id="UP000002530">
    <property type="component" value="Chromosome 5"/>
</dbReference>
<dbReference type="GO" id="GO:0090575">
    <property type="term" value="C:RNA polymerase II transcription regulator complex"/>
    <property type="evidence" value="ECO:0000318"/>
    <property type="project" value="GO_Central"/>
</dbReference>
<dbReference type="GO" id="GO:0001228">
    <property type="term" value="F:DNA-binding transcription activator activity, RNA polymerase II-specific"/>
    <property type="evidence" value="ECO:0000318"/>
    <property type="project" value="GO_Central"/>
</dbReference>
<dbReference type="GO" id="GO:0000976">
    <property type="term" value="F:transcription cis-regulatory region binding"/>
    <property type="evidence" value="ECO:0000318"/>
    <property type="project" value="GO_Central"/>
</dbReference>
<dbReference type="GO" id="GO:0010106">
    <property type="term" value="P:cellular response to iron ion starvation"/>
    <property type="evidence" value="ECO:0000315"/>
    <property type="project" value="AspGD"/>
</dbReference>
<dbReference type="GO" id="GO:0031171">
    <property type="term" value="P:ferricrocin biosynthetic process"/>
    <property type="evidence" value="ECO:0000315"/>
    <property type="project" value="AspGD"/>
</dbReference>
<dbReference type="GO" id="GO:1900551">
    <property type="term" value="P:N',N'',N'''-triacetylfusarinine C biosynthetic process"/>
    <property type="evidence" value="ECO:0000315"/>
    <property type="project" value="AspGD"/>
</dbReference>
<dbReference type="FunFam" id="1.20.5.170:FF:000102">
    <property type="entry name" value="bZIP transcription factor hapX"/>
    <property type="match status" value="1"/>
</dbReference>
<dbReference type="Gene3D" id="1.20.5.170">
    <property type="match status" value="1"/>
</dbReference>
<dbReference type="InterPro" id="IPR050936">
    <property type="entry name" value="AP-1-like"/>
</dbReference>
<dbReference type="InterPro" id="IPR004827">
    <property type="entry name" value="bZIP"/>
</dbReference>
<dbReference type="InterPro" id="IPR046347">
    <property type="entry name" value="bZIP_sf"/>
</dbReference>
<dbReference type="InterPro" id="IPR018287">
    <property type="entry name" value="Hap4_TF_heteromerisation"/>
</dbReference>
<dbReference type="PANTHER" id="PTHR40621:SF7">
    <property type="entry name" value="BZIP DOMAIN-CONTAINING PROTEIN"/>
    <property type="match status" value="1"/>
</dbReference>
<dbReference type="PANTHER" id="PTHR40621">
    <property type="entry name" value="TRANSCRIPTION FACTOR KAPC-RELATED"/>
    <property type="match status" value="1"/>
</dbReference>
<dbReference type="Pfam" id="PF10297">
    <property type="entry name" value="Hap4_Hap_bind"/>
    <property type="match status" value="1"/>
</dbReference>
<dbReference type="SMART" id="SM00338">
    <property type="entry name" value="BRLZ"/>
    <property type="match status" value="1"/>
</dbReference>
<dbReference type="SUPFAM" id="SSF57959">
    <property type="entry name" value="Leucine zipper domain"/>
    <property type="match status" value="1"/>
</dbReference>
<dbReference type="PROSITE" id="PS00036">
    <property type="entry name" value="BZIP_BASIC"/>
    <property type="match status" value="1"/>
</dbReference>
<accession>Q4WER3</accession>
<keyword id="KW-0539">Nucleus</keyword>
<keyword id="KW-1185">Reference proteome</keyword>
<keyword id="KW-0804">Transcription</keyword>
<keyword id="KW-0805">Transcription regulation</keyword>
<gene>
    <name evidence="5" type="primary">hapX</name>
    <name type="ORF">AFUA_5G03920</name>
</gene>
<sequence>MSTPSIAPAPAPLVPALAAKPAISPSPGPGTPGSITSKEWVIPPRPKPGRKPATDTPPTKRKAQNRAAQRAFRERRAARVNELEEQIKKIEDEHEIHIAAFKEQITNLSREVEQCRSEMTWWRDRCHALEKEVSVERSAKEAIVKEFRSSLSDREAVRSDKGLAPLTTSTPQARSSDRPDNGDASNNDSGEGREEVPLGCNDCSTSHCQCIEDAFTMPGVVAQEQSRRLDTTKPGLSEPQIKPDPEEMEIDFTSRFAATQQQDQSPTSVSSPAVDPCGFCSDGTPCICAEMAAQEEQRPRRNSFENNRLAPIQNLSQFTPPPSDGDVRSDVTLPPISQATNPCANGPGTCAQCLADPRRTLFCKTLAASRSPSAAPSGCCGGKGADGGCCQSRNTNVSRGRSGSNNNTSSGSSAAPSLTLSCADAYTTLSRHPNFSRATDELSTWLPKLHTLPKPRDFPLTDRGVPRAALEVEAASVMGVLRYFDRRFADK</sequence>
<proteinExistence type="evidence at transcript level"/>
<organism>
    <name type="scientific">Aspergillus fumigatus (strain ATCC MYA-4609 / CBS 101355 / FGSC A1100 / Af293)</name>
    <name type="common">Neosartorya fumigata</name>
    <dbReference type="NCBI Taxonomy" id="330879"/>
    <lineage>
        <taxon>Eukaryota</taxon>
        <taxon>Fungi</taxon>
        <taxon>Dikarya</taxon>
        <taxon>Ascomycota</taxon>
        <taxon>Pezizomycotina</taxon>
        <taxon>Eurotiomycetes</taxon>
        <taxon>Eurotiomycetidae</taxon>
        <taxon>Eurotiales</taxon>
        <taxon>Aspergillaceae</taxon>
        <taxon>Aspergillus</taxon>
        <taxon>Aspergillus subgen. Fumigati</taxon>
    </lineage>
</organism>
<comment type="function">
    <text evidence="4">Transcription factor required for repression of genes during iron starvation (PubMed:21062375). Represses iron-dependent and mitochondrial-localized activities including respiration, TCA cycle, amino acid metabolism, iron-sulfur-cluster and heme biosynthesis (PubMed:21062375). Iron starvation causes a massive remodeling of the amino acid pool and hapX is essential for the coordination of the production of siderophores and their precursor ornithine (PubMed:21062375).</text>
</comment>
<comment type="subcellular location">
    <subcellularLocation>
        <location evidence="1">Nucleus</location>
    </subcellularLocation>
</comment>
<comment type="induction">
    <text evidence="3 4">Expression is repressed by iron (PubMed:21062375). Expression is induced by the zinc cluster transcription factor acuM to stimulate expression of genes involved in both reductive iron assimilation and siderophore-mediated iron uptake (PubMed:20941352).</text>
</comment>
<comment type="disruption phenotype">
    <text evidence="4">Causes decreased production of triacetylfusarinine C (TAFC) but not fusarinine C (FsC) (PubMed:21062375). Attenuates virulence in a murine model of invasive aspergillosis (PubMed:21062375). Also increases zinc sensitivity (PubMed:21062375).</text>
</comment>
<comment type="similarity">
    <text evidence="6">Belongs to the bZIP family. YAP subfamily.</text>
</comment>
<feature type="chain" id="PRO_0000444414" description="bZIP transcription factor hapX">
    <location>
        <begin position="1"/>
        <end position="491"/>
    </location>
</feature>
<feature type="domain" description="bZIP" evidence="1">
    <location>
        <begin position="55"/>
        <end position="95"/>
    </location>
</feature>
<feature type="region of interest" description="Disordered" evidence="2">
    <location>
        <begin position="19"/>
        <end position="73"/>
    </location>
</feature>
<feature type="region of interest" description="Basic motif" evidence="1">
    <location>
        <begin position="60"/>
        <end position="79"/>
    </location>
</feature>
<feature type="region of interest" description="Leucine-zipper" evidence="1">
    <location>
        <begin position="83"/>
        <end position="90"/>
    </location>
</feature>
<feature type="region of interest" description="Disordered" evidence="2">
    <location>
        <begin position="149"/>
        <end position="196"/>
    </location>
</feature>
<feature type="region of interest" description="Disordered" evidence="2">
    <location>
        <begin position="224"/>
        <end position="245"/>
    </location>
</feature>
<feature type="region of interest" description="Disordered" evidence="2">
    <location>
        <begin position="397"/>
        <end position="416"/>
    </location>
</feature>
<feature type="compositionally biased region" description="Basic and acidic residues" evidence="2">
    <location>
        <begin position="149"/>
        <end position="161"/>
    </location>
</feature>
<feature type="compositionally biased region" description="Low complexity" evidence="2">
    <location>
        <begin position="397"/>
        <end position="413"/>
    </location>
</feature>
<protein>
    <recommendedName>
        <fullName evidence="5">bZIP transcription factor hapX</fullName>
    </recommendedName>
    <alternativeName>
        <fullName evidence="5">Iron acquisition regulator hapX</fullName>
    </alternativeName>
</protein>
<evidence type="ECO:0000255" key="1">
    <source>
        <dbReference type="PROSITE-ProRule" id="PRU00978"/>
    </source>
</evidence>
<evidence type="ECO:0000256" key="2">
    <source>
        <dbReference type="SAM" id="MobiDB-lite"/>
    </source>
</evidence>
<evidence type="ECO:0000269" key="3">
    <source>
    </source>
</evidence>
<evidence type="ECO:0000269" key="4">
    <source>
    </source>
</evidence>
<evidence type="ECO:0000303" key="5">
    <source>
    </source>
</evidence>
<evidence type="ECO:0000305" key="6"/>
<name>HAPX_ASPFU</name>
<reference key="1">
    <citation type="journal article" date="2005" name="Nature">
        <title>Genomic sequence of the pathogenic and allergenic filamentous fungus Aspergillus fumigatus.</title>
        <authorList>
            <person name="Nierman W.C."/>
            <person name="Pain A."/>
            <person name="Anderson M.J."/>
            <person name="Wortman J.R."/>
            <person name="Kim H.S."/>
            <person name="Arroyo J."/>
            <person name="Berriman M."/>
            <person name="Abe K."/>
            <person name="Archer D.B."/>
            <person name="Bermejo C."/>
            <person name="Bennett J.W."/>
            <person name="Bowyer P."/>
            <person name="Chen D."/>
            <person name="Collins M."/>
            <person name="Coulsen R."/>
            <person name="Davies R."/>
            <person name="Dyer P.S."/>
            <person name="Farman M.L."/>
            <person name="Fedorova N."/>
            <person name="Fedorova N.D."/>
            <person name="Feldblyum T.V."/>
            <person name="Fischer R."/>
            <person name="Fosker N."/>
            <person name="Fraser A."/>
            <person name="Garcia J.L."/>
            <person name="Garcia M.J."/>
            <person name="Goble A."/>
            <person name="Goldman G.H."/>
            <person name="Gomi K."/>
            <person name="Griffith-Jones S."/>
            <person name="Gwilliam R."/>
            <person name="Haas B.J."/>
            <person name="Haas H."/>
            <person name="Harris D.E."/>
            <person name="Horiuchi H."/>
            <person name="Huang J."/>
            <person name="Humphray S."/>
            <person name="Jimenez J."/>
            <person name="Keller N."/>
            <person name="Khouri H."/>
            <person name="Kitamoto K."/>
            <person name="Kobayashi T."/>
            <person name="Konzack S."/>
            <person name="Kulkarni R."/>
            <person name="Kumagai T."/>
            <person name="Lafton A."/>
            <person name="Latge J.-P."/>
            <person name="Li W."/>
            <person name="Lord A."/>
            <person name="Lu C."/>
            <person name="Majoros W.H."/>
            <person name="May G.S."/>
            <person name="Miller B.L."/>
            <person name="Mohamoud Y."/>
            <person name="Molina M."/>
            <person name="Monod M."/>
            <person name="Mouyna I."/>
            <person name="Mulligan S."/>
            <person name="Murphy L.D."/>
            <person name="O'Neil S."/>
            <person name="Paulsen I."/>
            <person name="Penalva M.A."/>
            <person name="Pertea M."/>
            <person name="Price C."/>
            <person name="Pritchard B.L."/>
            <person name="Quail M.A."/>
            <person name="Rabbinowitsch E."/>
            <person name="Rawlins N."/>
            <person name="Rajandream M.A."/>
            <person name="Reichard U."/>
            <person name="Renauld H."/>
            <person name="Robson G.D."/>
            <person name="Rodriguez de Cordoba S."/>
            <person name="Rodriguez-Pena J.M."/>
            <person name="Ronning C.M."/>
            <person name="Rutter S."/>
            <person name="Salzberg S.L."/>
            <person name="Sanchez M."/>
            <person name="Sanchez-Ferrero J.C."/>
            <person name="Saunders D."/>
            <person name="Seeger K."/>
            <person name="Squares R."/>
            <person name="Squares S."/>
            <person name="Takeuchi M."/>
            <person name="Tekaia F."/>
            <person name="Turner G."/>
            <person name="Vazquez de Aldana C.R."/>
            <person name="Weidman J."/>
            <person name="White O."/>
            <person name="Woodward J.R."/>
            <person name="Yu J.-H."/>
            <person name="Fraser C.M."/>
            <person name="Galagan J.E."/>
            <person name="Asai K."/>
            <person name="Machida M."/>
            <person name="Hall N."/>
            <person name="Barrell B.G."/>
            <person name="Denning D.W."/>
        </authorList>
    </citation>
    <scope>NUCLEOTIDE SEQUENCE [LARGE SCALE GENOMIC DNA]</scope>
    <source>
        <strain>ATCC MYA-4609 / CBS 101355 / FGSC A1100 / Af293</strain>
    </source>
</reference>
<reference key="2">
    <citation type="journal article" date="2010" name="Mol. Microbiol.">
        <title>Aspergillus fumigatus AcuM regulates both iron acquisition and gluconeogenesis.</title>
        <authorList>
            <person name="Liu H."/>
            <person name="Gravelat F.N."/>
            <person name="Chiang L.Y."/>
            <person name="Chen D."/>
            <person name="Vanier G."/>
            <person name="Ejzykowicz D.E."/>
            <person name="Ibrahim A.S."/>
            <person name="Nierman W.C."/>
            <person name="Sheppard D.C."/>
            <person name="Filler S.G."/>
        </authorList>
    </citation>
    <scope>INDUCTION</scope>
    <source>
        <strain>ATCC MYA-4609 / CBS 101355 / FGSC A1100 / Af293</strain>
    </source>
</reference>
<reference key="3">
    <citation type="journal article" date="2010" name="PLoS Pathog.">
        <title>HapX-mediated adaption to iron starvation is crucial for virulence of Aspergillus fumigatus.</title>
        <authorList>
            <person name="Schrettl M."/>
            <person name="Beckmann N."/>
            <person name="Varga J."/>
            <person name="Heinekamp T."/>
            <person name="Jacobsen I.D."/>
            <person name="Joechl C."/>
            <person name="Moussa T.A."/>
            <person name="Wang S."/>
            <person name="Gsaller F."/>
            <person name="Blatzer M."/>
            <person name="Werner E.R."/>
            <person name="Niermann W.C."/>
            <person name="Brakhage A.A."/>
            <person name="Haas H."/>
        </authorList>
    </citation>
    <scope>FUNCTION</scope>
    <scope>DISRUPTION PHENOTYPE</scope>
</reference>